<reference key="1">
    <citation type="journal article" date="2002" name="DNA Res.">
        <title>Complete genome structure of the thermophilic cyanobacterium Thermosynechococcus elongatus BP-1.</title>
        <authorList>
            <person name="Nakamura Y."/>
            <person name="Kaneko T."/>
            <person name="Sato S."/>
            <person name="Ikeuchi M."/>
            <person name="Katoh H."/>
            <person name="Sasamoto S."/>
            <person name="Watanabe A."/>
            <person name="Iriguchi M."/>
            <person name="Kawashima K."/>
            <person name="Kimura T."/>
            <person name="Kishida Y."/>
            <person name="Kiyokawa C."/>
            <person name="Kohara M."/>
            <person name="Matsumoto M."/>
            <person name="Matsuno A."/>
            <person name="Nakazaki N."/>
            <person name="Shimpo S."/>
            <person name="Sugimoto M."/>
            <person name="Takeuchi C."/>
            <person name="Yamada M."/>
            <person name="Tabata S."/>
        </authorList>
    </citation>
    <scope>NUCLEOTIDE SEQUENCE [LARGE SCALE GENOMIC DNA]</scope>
    <source>
        <strain>NIES-2133 / IAM M-273 / BP-1</strain>
    </source>
</reference>
<accession>Q8DK13</accession>
<proteinExistence type="inferred from homology"/>
<comment type="function">
    <text evidence="1">Functions in the biosynthesis of branched-chain amino acids. Catalyzes the dehydration of (2R,3R)-2,3-dihydroxy-3-methylpentanoate (2,3-dihydroxy-3-methylvalerate) into 2-oxo-3-methylpentanoate (2-oxo-3-methylvalerate) and of (2R)-2,3-dihydroxy-3-methylbutanoate (2,3-dihydroxyisovalerate) into 2-oxo-3-methylbutanoate (2-oxoisovalerate), the penultimate precursor to L-isoleucine and L-valine, respectively.</text>
</comment>
<comment type="catalytic activity">
    <reaction evidence="1">
        <text>(2R)-2,3-dihydroxy-3-methylbutanoate = 3-methyl-2-oxobutanoate + H2O</text>
        <dbReference type="Rhea" id="RHEA:24809"/>
        <dbReference type="ChEBI" id="CHEBI:11851"/>
        <dbReference type="ChEBI" id="CHEBI:15377"/>
        <dbReference type="ChEBI" id="CHEBI:49072"/>
        <dbReference type="EC" id="4.2.1.9"/>
    </reaction>
    <physiologicalReaction direction="left-to-right" evidence="1">
        <dbReference type="Rhea" id="RHEA:24810"/>
    </physiologicalReaction>
</comment>
<comment type="catalytic activity">
    <reaction evidence="1">
        <text>(2R,3R)-2,3-dihydroxy-3-methylpentanoate = (S)-3-methyl-2-oxopentanoate + H2O</text>
        <dbReference type="Rhea" id="RHEA:27694"/>
        <dbReference type="ChEBI" id="CHEBI:15377"/>
        <dbReference type="ChEBI" id="CHEBI:35146"/>
        <dbReference type="ChEBI" id="CHEBI:49258"/>
        <dbReference type="EC" id="4.2.1.9"/>
    </reaction>
    <physiologicalReaction direction="left-to-right" evidence="1">
        <dbReference type="Rhea" id="RHEA:27695"/>
    </physiologicalReaction>
</comment>
<comment type="cofactor">
    <cofactor evidence="1">
        <name>[2Fe-2S] cluster</name>
        <dbReference type="ChEBI" id="CHEBI:190135"/>
    </cofactor>
    <text evidence="1">Binds 1 [2Fe-2S] cluster per subunit. This cluster acts as a Lewis acid cofactor.</text>
</comment>
<comment type="cofactor">
    <cofactor evidence="1">
        <name>Mg(2+)</name>
        <dbReference type="ChEBI" id="CHEBI:18420"/>
    </cofactor>
</comment>
<comment type="pathway">
    <text evidence="1">Amino-acid biosynthesis; L-isoleucine biosynthesis; L-isoleucine from 2-oxobutanoate: step 3/4.</text>
</comment>
<comment type="pathway">
    <text evidence="1">Amino-acid biosynthesis; L-valine biosynthesis; L-valine from pyruvate: step 3/4.</text>
</comment>
<comment type="subunit">
    <text evidence="1">Homodimer.</text>
</comment>
<comment type="similarity">
    <text evidence="1">Belongs to the IlvD/Edd family.</text>
</comment>
<protein>
    <recommendedName>
        <fullName evidence="1">Dihydroxy-acid dehydratase</fullName>
        <shortName evidence="1">DAD</shortName>
        <ecNumber evidence="1">4.2.1.9</ecNumber>
    </recommendedName>
</protein>
<feature type="chain" id="PRO_0000103518" description="Dihydroxy-acid dehydratase">
    <location>
        <begin position="1"/>
        <end position="560"/>
    </location>
</feature>
<feature type="active site" description="Proton acceptor" evidence="1">
    <location>
        <position position="473"/>
    </location>
</feature>
<feature type="binding site" evidence="1">
    <location>
        <position position="50"/>
    </location>
    <ligand>
        <name>[2Fe-2S] cluster</name>
        <dbReference type="ChEBI" id="CHEBI:190135"/>
    </ligand>
</feature>
<feature type="binding site" evidence="1">
    <location>
        <position position="82"/>
    </location>
    <ligand>
        <name>Mg(2+)</name>
        <dbReference type="ChEBI" id="CHEBI:18420"/>
    </ligand>
</feature>
<feature type="binding site" evidence="1">
    <location>
        <position position="123"/>
    </location>
    <ligand>
        <name>[2Fe-2S] cluster</name>
        <dbReference type="ChEBI" id="CHEBI:190135"/>
    </ligand>
</feature>
<feature type="binding site" evidence="1">
    <location>
        <position position="124"/>
    </location>
    <ligand>
        <name>Mg(2+)</name>
        <dbReference type="ChEBI" id="CHEBI:18420"/>
    </ligand>
</feature>
<feature type="binding site" description="via carbamate group" evidence="1">
    <location>
        <position position="125"/>
    </location>
    <ligand>
        <name>Mg(2+)</name>
        <dbReference type="ChEBI" id="CHEBI:18420"/>
    </ligand>
</feature>
<feature type="binding site" evidence="1">
    <location>
        <position position="195"/>
    </location>
    <ligand>
        <name>[2Fe-2S] cluster</name>
        <dbReference type="ChEBI" id="CHEBI:190135"/>
    </ligand>
</feature>
<feature type="binding site" evidence="1">
    <location>
        <position position="447"/>
    </location>
    <ligand>
        <name>Mg(2+)</name>
        <dbReference type="ChEBI" id="CHEBI:18420"/>
    </ligand>
</feature>
<feature type="modified residue" description="N6-carboxylysine" evidence="1">
    <location>
        <position position="125"/>
    </location>
</feature>
<name>ILVD_THEVB</name>
<keyword id="KW-0001">2Fe-2S</keyword>
<keyword id="KW-0028">Amino-acid biosynthesis</keyword>
<keyword id="KW-0100">Branched-chain amino acid biosynthesis</keyword>
<keyword id="KW-0408">Iron</keyword>
<keyword id="KW-0411">Iron-sulfur</keyword>
<keyword id="KW-0456">Lyase</keyword>
<keyword id="KW-0460">Magnesium</keyword>
<keyword id="KW-0479">Metal-binding</keyword>
<keyword id="KW-1185">Reference proteome</keyword>
<sequence>MAENWRSRIITEGIQRTPNRAMLRAVGFGDEDFNKPIVGVASAHSTITPCNMGIAALASRAEAGIRAAGGMPQLFGTITVSDGISMGTEGMKYSLVSRDVIADSIETVCNAQSMDGVLAIGGCDKNMPGAMIAMARMNIPAIFVYGGTIKPGHWQGQDLTVVSAFEAVGQFSAGKMDEATLHAIEHHACPGAGSCGGMFTANTMSSAFEAMGMSLMYSSTMTAEDAEKADSTELAGKVLVEAIRKNIRPRDIITRKSIENAISVIMAVGGSTNAVLHFLAIAHSAEVPLTIDDFETIRQRVPVLCDLKPSGKYVTADLHRAGGIPQVMKMLLNAGLLHGDCLTITGETIAERLRHVPDTPDPNQDVIRPFDQPLYATGHLAILKGNLASEGAVAKISGVKNPQITGPARVFDSEEDCLDAILAGKINPGDVIVIRYEGPVGGPGMREMLAPTSAIIGAGLGDSVGLITDGRFSGGTYGMVVGHVAPEAAVGGTIALVQEGDSITIDAHRRLLQLNVSEEELAARRAKWQPPAPRYTRGVLAKYAKLVSSSSLGAVTDRFV</sequence>
<gene>
    <name evidence="1" type="primary">ilvD</name>
    <name type="ordered locus">tll1057</name>
</gene>
<evidence type="ECO:0000255" key="1">
    <source>
        <dbReference type="HAMAP-Rule" id="MF_00012"/>
    </source>
</evidence>
<dbReference type="EC" id="4.2.1.9" evidence="1"/>
<dbReference type="EMBL" id="BA000039">
    <property type="protein sequence ID" value="BAC08610.1"/>
    <property type="molecule type" value="Genomic_DNA"/>
</dbReference>
<dbReference type="RefSeq" id="NP_681848.1">
    <property type="nucleotide sequence ID" value="NC_004113.1"/>
</dbReference>
<dbReference type="RefSeq" id="WP_011056900.1">
    <property type="nucleotide sequence ID" value="NC_004113.1"/>
</dbReference>
<dbReference type="SMR" id="Q8DK13"/>
<dbReference type="STRING" id="197221.gene:10747651"/>
<dbReference type="EnsemblBacteria" id="BAC08610">
    <property type="protein sequence ID" value="BAC08610"/>
    <property type="gene ID" value="BAC08610"/>
</dbReference>
<dbReference type="KEGG" id="tel:tll1057"/>
<dbReference type="PATRIC" id="fig|197221.4.peg.1110"/>
<dbReference type="eggNOG" id="COG0129">
    <property type="taxonomic scope" value="Bacteria"/>
</dbReference>
<dbReference type="UniPathway" id="UPA00047">
    <property type="reaction ID" value="UER00057"/>
</dbReference>
<dbReference type="UniPathway" id="UPA00049">
    <property type="reaction ID" value="UER00061"/>
</dbReference>
<dbReference type="Proteomes" id="UP000000440">
    <property type="component" value="Chromosome"/>
</dbReference>
<dbReference type="GO" id="GO:0051537">
    <property type="term" value="F:2 iron, 2 sulfur cluster binding"/>
    <property type="evidence" value="ECO:0007669"/>
    <property type="project" value="UniProtKB-UniRule"/>
</dbReference>
<dbReference type="GO" id="GO:0004160">
    <property type="term" value="F:dihydroxy-acid dehydratase activity"/>
    <property type="evidence" value="ECO:0007669"/>
    <property type="project" value="UniProtKB-UniRule"/>
</dbReference>
<dbReference type="GO" id="GO:0000287">
    <property type="term" value="F:magnesium ion binding"/>
    <property type="evidence" value="ECO:0007669"/>
    <property type="project" value="UniProtKB-UniRule"/>
</dbReference>
<dbReference type="GO" id="GO:0009097">
    <property type="term" value="P:isoleucine biosynthetic process"/>
    <property type="evidence" value="ECO:0007669"/>
    <property type="project" value="UniProtKB-UniRule"/>
</dbReference>
<dbReference type="GO" id="GO:0009099">
    <property type="term" value="P:L-valine biosynthetic process"/>
    <property type="evidence" value="ECO:0007669"/>
    <property type="project" value="UniProtKB-UniRule"/>
</dbReference>
<dbReference type="FunFam" id="3.50.30.80:FF:000001">
    <property type="entry name" value="Dihydroxy-acid dehydratase"/>
    <property type="match status" value="1"/>
</dbReference>
<dbReference type="Gene3D" id="3.50.30.80">
    <property type="entry name" value="IlvD/EDD C-terminal domain-like"/>
    <property type="match status" value="1"/>
</dbReference>
<dbReference type="HAMAP" id="MF_00012">
    <property type="entry name" value="IlvD"/>
    <property type="match status" value="1"/>
</dbReference>
<dbReference type="InterPro" id="IPR050165">
    <property type="entry name" value="DHAD_IlvD/Edd"/>
</dbReference>
<dbReference type="InterPro" id="IPR042096">
    <property type="entry name" value="Dihydro-acid_dehy_C"/>
</dbReference>
<dbReference type="InterPro" id="IPR004404">
    <property type="entry name" value="DihydroxyA_deHydtase"/>
</dbReference>
<dbReference type="InterPro" id="IPR020558">
    <property type="entry name" value="DiOHA_6PGluconate_deHydtase_CS"/>
</dbReference>
<dbReference type="InterPro" id="IPR056740">
    <property type="entry name" value="ILV_EDD_C"/>
</dbReference>
<dbReference type="InterPro" id="IPR000581">
    <property type="entry name" value="ILV_EDD_N"/>
</dbReference>
<dbReference type="InterPro" id="IPR037237">
    <property type="entry name" value="IlvD/EDD_N"/>
</dbReference>
<dbReference type="NCBIfam" id="TIGR00110">
    <property type="entry name" value="ilvD"/>
    <property type="match status" value="1"/>
</dbReference>
<dbReference type="NCBIfam" id="NF002068">
    <property type="entry name" value="PRK00911.1"/>
    <property type="match status" value="1"/>
</dbReference>
<dbReference type="PANTHER" id="PTHR21000">
    <property type="entry name" value="DIHYDROXY-ACID DEHYDRATASE DAD"/>
    <property type="match status" value="1"/>
</dbReference>
<dbReference type="PANTHER" id="PTHR21000:SF5">
    <property type="entry name" value="DIHYDROXY-ACID DEHYDRATASE, MITOCHONDRIAL"/>
    <property type="match status" value="1"/>
</dbReference>
<dbReference type="Pfam" id="PF24877">
    <property type="entry name" value="ILV_EDD_C"/>
    <property type="match status" value="1"/>
</dbReference>
<dbReference type="Pfam" id="PF00920">
    <property type="entry name" value="ILVD_EDD_N"/>
    <property type="match status" value="1"/>
</dbReference>
<dbReference type="SUPFAM" id="SSF143975">
    <property type="entry name" value="IlvD/EDD N-terminal domain-like"/>
    <property type="match status" value="1"/>
</dbReference>
<dbReference type="SUPFAM" id="SSF52016">
    <property type="entry name" value="LeuD/IlvD-like"/>
    <property type="match status" value="1"/>
</dbReference>
<dbReference type="PROSITE" id="PS00886">
    <property type="entry name" value="ILVD_EDD_1"/>
    <property type="match status" value="1"/>
</dbReference>
<dbReference type="PROSITE" id="PS00887">
    <property type="entry name" value="ILVD_EDD_2"/>
    <property type="match status" value="1"/>
</dbReference>
<organism>
    <name type="scientific">Thermosynechococcus vestitus (strain NIES-2133 / IAM M-273 / BP-1)</name>
    <dbReference type="NCBI Taxonomy" id="197221"/>
    <lineage>
        <taxon>Bacteria</taxon>
        <taxon>Bacillati</taxon>
        <taxon>Cyanobacteriota</taxon>
        <taxon>Cyanophyceae</taxon>
        <taxon>Acaryochloridales</taxon>
        <taxon>Thermosynechococcaceae</taxon>
        <taxon>Thermosynechococcus</taxon>
    </lineage>
</organism>